<keyword id="KW-0963">Cytoplasm</keyword>
<keyword id="KW-0342">GTP-binding</keyword>
<keyword id="KW-0396">Initiation factor</keyword>
<keyword id="KW-0547">Nucleotide-binding</keyword>
<keyword id="KW-0648">Protein biosynthesis</keyword>
<keyword id="KW-1185">Reference proteome</keyword>
<accession>A3CQ18</accession>
<proteinExistence type="inferred from homology"/>
<gene>
    <name evidence="2" type="primary">infB</name>
    <name type="ordered locus">SSA_1896</name>
</gene>
<comment type="function">
    <text evidence="2">One of the essential components for the initiation of protein synthesis. Protects formylmethionyl-tRNA from spontaneous hydrolysis and promotes its binding to the 30S ribosomal subunits. Also involved in the hydrolysis of GTP during the formation of the 70S ribosomal complex.</text>
</comment>
<comment type="subcellular location">
    <subcellularLocation>
        <location evidence="2">Cytoplasm</location>
    </subcellularLocation>
</comment>
<comment type="similarity">
    <text evidence="2">Belongs to the TRAFAC class translation factor GTPase superfamily. Classic translation factor GTPase family. IF-2 subfamily.</text>
</comment>
<protein>
    <recommendedName>
        <fullName evidence="2">Translation initiation factor IF-2</fullName>
    </recommendedName>
</protein>
<name>IF2_STRSV</name>
<organism>
    <name type="scientific">Streptococcus sanguinis (strain SK36)</name>
    <dbReference type="NCBI Taxonomy" id="388919"/>
    <lineage>
        <taxon>Bacteria</taxon>
        <taxon>Bacillati</taxon>
        <taxon>Bacillota</taxon>
        <taxon>Bacilli</taxon>
        <taxon>Lactobacillales</taxon>
        <taxon>Streptococcaceae</taxon>
        <taxon>Streptococcus</taxon>
    </lineage>
</organism>
<feature type="chain" id="PRO_1000008355" description="Translation initiation factor IF-2">
    <location>
        <begin position="1"/>
        <end position="930"/>
    </location>
</feature>
<feature type="domain" description="tr-type G">
    <location>
        <begin position="432"/>
        <end position="599"/>
    </location>
</feature>
<feature type="region of interest" description="Disordered" evidence="3">
    <location>
        <begin position="27"/>
        <end position="342"/>
    </location>
</feature>
<feature type="region of interest" description="G1" evidence="1">
    <location>
        <begin position="441"/>
        <end position="448"/>
    </location>
</feature>
<feature type="region of interest" description="G2" evidence="1">
    <location>
        <begin position="466"/>
        <end position="470"/>
    </location>
</feature>
<feature type="region of interest" description="G3" evidence="1">
    <location>
        <begin position="487"/>
        <end position="490"/>
    </location>
</feature>
<feature type="region of interest" description="G4" evidence="1">
    <location>
        <begin position="541"/>
        <end position="544"/>
    </location>
</feature>
<feature type="region of interest" description="G5" evidence="1">
    <location>
        <begin position="577"/>
        <end position="579"/>
    </location>
</feature>
<feature type="compositionally biased region" description="Low complexity" evidence="3">
    <location>
        <begin position="52"/>
        <end position="103"/>
    </location>
</feature>
<feature type="compositionally biased region" description="Basic and acidic residues" evidence="3">
    <location>
        <begin position="112"/>
        <end position="128"/>
    </location>
</feature>
<feature type="compositionally biased region" description="Basic and acidic residues" evidence="3">
    <location>
        <begin position="136"/>
        <end position="178"/>
    </location>
</feature>
<feature type="compositionally biased region" description="Polar residues" evidence="3">
    <location>
        <begin position="183"/>
        <end position="195"/>
    </location>
</feature>
<feature type="compositionally biased region" description="Basic and acidic residues" evidence="3">
    <location>
        <begin position="218"/>
        <end position="245"/>
    </location>
</feature>
<feature type="compositionally biased region" description="Pro residues" evidence="3">
    <location>
        <begin position="251"/>
        <end position="268"/>
    </location>
</feature>
<feature type="compositionally biased region" description="Basic and acidic residues" evidence="3">
    <location>
        <begin position="280"/>
        <end position="297"/>
    </location>
</feature>
<feature type="compositionally biased region" description="Low complexity" evidence="3">
    <location>
        <begin position="302"/>
        <end position="318"/>
    </location>
</feature>
<feature type="binding site" evidence="2">
    <location>
        <begin position="441"/>
        <end position="448"/>
    </location>
    <ligand>
        <name>GTP</name>
        <dbReference type="ChEBI" id="CHEBI:37565"/>
    </ligand>
</feature>
<feature type="binding site" evidence="2">
    <location>
        <begin position="487"/>
        <end position="491"/>
    </location>
    <ligand>
        <name>GTP</name>
        <dbReference type="ChEBI" id="CHEBI:37565"/>
    </ligand>
</feature>
<feature type="binding site" evidence="2">
    <location>
        <begin position="541"/>
        <end position="544"/>
    </location>
    <ligand>
        <name>GTP</name>
        <dbReference type="ChEBI" id="CHEBI:37565"/>
    </ligand>
</feature>
<evidence type="ECO:0000250" key="1"/>
<evidence type="ECO:0000255" key="2">
    <source>
        <dbReference type="HAMAP-Rule" id="MF_00100"/>
    </source>
</evidence>
<evidence type="ECO:0000256" key="3">
    <source>
        <dbReference type="SAM" id="MobiDB-lite"/>
    </source>
</evidence>
<reference key="1">
    <citation type="journal article" date="2007" name="J. Bacteriol.">
        <title>Genome of the opportunistic pathogen Streptococcus sanguinis.</title>
        <authorList>
            <person name="Xu P."/>
            <person name="Alves J.M."/>
            <person name="Kitten T."/>
            <person name="Brown A."/>
            <person name="Chen Z."/>
            <person name="Ozaki L.S."/>
            <person name="Manque P."/>
            <person name="Ge X."/>
            <person name="Serrano M.G."/>
            <person name="Puiu D."/>
            <person name="Hendricks S."/>
            <person name="Wang Y."/>
            <person name="Chaplin M.D."/>
            <person name="Akan D."/>
            <person name="Paik S."/>
            <person name="Peterson D.L."/>
            <person name="Macrina F.L."/>
            <person name="Buck G.A."/>
        </authorList>
    </citation>
    <scope>NUCLEOTIDE SEQUENCE [LARGE SCALE GENOMIC DNA]</scope>
    <source>
        <strain>SK36</strain>
    </source>
</reference>
<dbReference type="EMBL" id="CP000387">
    <property type="protein sequence ID" value="ABN45273.1"/>
    <property type="molecule type" value="Genomic_DNA"/>
</dbReference>
<dbReference type="RefSeq" id="WP_011837434.1">
    <property type="nucleotide sequence ID" value="NC_009009.1"/>
</dbReference>
<dbReference type="RefSeq" id="YP_001035823.1">
    <property type="nucleotide sequence ID" value="NC_009009.1"/>
</dbReference>
<dbReference type="SMR" id="A3CQ18"/>
<dbReference type="STRING" id="388919.SSA_1896"/>
<dbReference type="KEGG" id="ssa:SSA_1896"/>
<dbReference type="PATRIC" id="fig|388919.9.peg.1798"/>
<dbReference type="eggNOG" id="COG0532">
    <property type="taxonomic scope" value="Bacteria"/>
</dbReference>
<dbReference type="HOGENOM" id="CLU_006301_5_0_9"/>
<dbReference type="OrthoDB" id="9811804at2"/>
<dbReference type="Proteomes" id="UP000002148">
    <property type="component" value="Chromosome"/>
</dbReference>
<dbReference type="GO" id="GO:0005829">
    <property type="term" value="C:cytosol"/>
    <property type="evidence" value="ECO:0007669"/>
    <property type="project" value="TreeGrafter"/>
</dbReference>
<dbReference type="GO" id="GO:0005525">
    <property type="term" value="F:GTP binding"/>
    <property type="evidence" value="ECO:0007669"/>
    <property type="project" value="UniProtKB-KW"/>
</dbReference>
<dbReference type="GO" id="GO:0003924">
    <property type="term" value="F:GTPase activity"/>
    <property type="evidence" value="ECO:0007669"/>
    <property type="project" value="UniProtKB-UniRule"/>
</dbReference>
<dbReference type="GO" id="GO:0003743">
    <property type="term" value="F:translation initiation factor activity"/>
    <property type="evidence" value="ECO:0007669"/>
    <property type="project" value="UniProtKB-UniRule"/>
</dbReference>
<dbReference type="CDD" id="cd01887">
    <property type="entry name" value="IF2_eIF5B"/>
    <property type="match status" value="1"/>
</dbReference>
<dbReference type="CDD" id="cd03702">
    <property type="entry name" value="IF2_mtIF2_II"/>
    <property type="match status" value="1"/>
</dbReference>
<dbReference type="CDD" id="cd03692">
    <property type="entry name" value="mtIF2_IVc"/>
    <property type="match status" value="1"/>
</dbReference>
<dbReference type="FunFam" id="1.10.10.2480:FF:000003">
    <property type="entry name" value="Translation initiation factor IF-2"/>
    <property type="match status" value="1"/>
</dbReference>
<dbReference type="FunFam" id="2.40.30.10:FF:000007">
    <property type="entry name" value="Translation initiation factor IF-2"/>
    <property type="match status" value="1"/>
</dbReference>
<dbReference type="FunFam" id="2.40.30.10:FF:000008">
    <property type="entry name" value="Translation initiation factor IF-2"/>
    <property type="match status" value="1"/>
</dbReference>
<dbReference type="FunFam" id="3.40.50.10050:FF:000001">
    <property type="entry name" value="Translation initiation factor IF-2"/>
    <property type="match status" value="1"/>
</dbReference>
<dbReference type="FunFam" id="3.40.50.300:FF:000019">
    <property type="entry name" value="Translation initiation factor IF-2"/>
    <property type="match status" value="1"/>
</dbReference>
<dbReference type="Gene3D" id="1.10.10.2480">
    <property type="match status" value="1"/>
</dbReference>
<dbReference type="Gene3D" id="3.40.50.300">
    <property type="entry name" value="P-loop containing nucleotide triphosphate hydrolases"/>
    <property type="match status" value="1"/>
</dbReference>
<dbReference type="Gene3D" id="2.40.30.10">
    <property type="entry name" value="Translation factors"/>
    <property type="match status" value="2"/>
</dbReference>
<dbReference type="Gene3D" id="3.40.50.10050">
    <property type="entry name" value="Translation initiation factor IF- 2, domain 3"/>
    <property type="match status" value="1"/>
</dbReference>
<dbReference type="HAMAP" id="MF_00100_B">
    <property type="entry name" value="IF_2_B"/>
    <property type="match status" value="1"/>
</dbReference>
<dbReference type="InterPro" id="IPR053905">
    <property type="entry name" value="EF-G-like_DII"/>
</dbReference>
<dbReference type="InterPro" id="IPR044145">
    <property type="entry name" value="IF2_II"/>
</dbReference>
<dbReference type="InterPro" id="IPR006847">
    <property type="entry name" value="IF2_N"/>
</dbReference>
<dbReference type="InterPro" id="IPR027417">
    <property type="entry name" value="P-loop_NTPase"/>
</dbReference>
<dbReference type="InterPro" id="IPR005225">
    <property type="entry name" value="Small_GTP-bd"/>
</dbReference>
<dbReference type="InterPro" id="IPR000795">
    <property type="entry name" value="T_Tr_GTP-bd_dom"/>
</dbReference>
<dbReference type="InterPro" id="IPR000178">
    <property type="entry name" value="TF_IF2_bacterial-like"/>
</dbReference>
<dbReference type="InterPro" id="IPR015760">
    <property type="entry name" value="TIF_IF2"/>
</dbReference>
<dbReference type="InterPro" id="IPR023115">
    <property type="entry name" value="TIF_IF2_dom3"/>
</dbReference>
<dbReference type="InterPro" id="IPR036925">
    <property type="entry name" value="TIF_IF2_dom3_sf"/>
</dbReference>
<dbReference type="InterPro" id="IPR009000">
    <property type="entry name" value="Transl_B-barrel_sf"/>
</dbReference>
<dbReference type="NCBIfam" id="TIGR00487">
    <property type="entry name" value="IF-2"/>
    <property type="match status" value="1"/>
</dbReference>
<dbReference type="NCBIfam" id="TIGR00231">
    <property type="entry name" value="small_GTP"/>
    <property type="match status" value="1"/>
</dbReference>
<dbReference type="PANTHER" id="PTHR43381:SF5">
    <property type="entry name" value="TR-TYPE G DOMAIN-CONTAINING PROTEIN"/>
    <property type="match status" value="1"/>
</dbReference>
<dbReference type="PANTHER" id="PTHR43381">
    <property type="entry name" value="TRANSLATION INITIATION FACTOR IF-2-RELATED"/>
    <property type="match status" value="1"/>
</dbReference>
<dbReference type="Pfam" id="PF22042">
    <property type="entry name" value="EF-G_D2"/>
    <property type="match status" value="1"/>
</dbReference>
<dbReference type="Pfam" id="PF00009">
    <property type="entry name" value="GTP_EFTU"/>
    <property type="match status" value="1"/>
</dbReference>
<dbReference type="Pfam" id="PF11987">
    <property type="entry name" value="IF-2"/>
    <property type="match status" value="1"/>
</dbReference>
<dbReference type="Pfam" id="PF04760">
    <property type="entry name" value="IF2_N"/>
    <property type="match status" value="2"/>
</dbReference>
<dbReference type="PRINTS" id="PR00449">
    <property type="entry name" value="RASTRNSFRMNG"/>
</dbReference>
<dbReference type="SUPFAM" id="SSF52156">
    <property type="entry name" value="Initiation factor IF2/eIF5b, domain 3"/>
    <property type="match status" value="1"/>
</dbReference>
<dbReference type="SUPFAM" id="SSF52540">
    <property type="entry name" value="P-loop containing nucleoside triphosphate hydrolases"/>
    <property type="match status" value="1"/>
</dbReference>
<dbReference type="SUPFAM" id="SSF50447">
    <property type="entry name" value="Translation proteins"/>
    <property type="match status" value="2"/>
</dbReference>
<dbReference type="PROSITE" id="PS51722">
    <property type="entry name" value="G_TR_2"/>
    <property type="match status" value="1"/>
</dbReference>
<dbReference type="PROSITE" id="PS01176">
    <property type="entry name" value="IF2"/>
    <property type="match status" value="1"/>
</dbReference>
<sequence>MSKVRLYEIAKELGKESKEVVARAKELGLDVKSHSSSVEADAGERIKSSFTKAAAPQAPAEKPVAAQPSPQKTPAKEAAPVKAEPTEAKAAAQPEAKTETAAPVKRPQSRNFKAEREARAKEEAERRKQQGNRKPQNKEQGKREDRDNRNKNRGNSNDRDRGNRPNDRRDNRGQDGRRNGQNHQGFNGQKRQQPQGPKIDFKARAAALKAEQNAEYARSSEERFKQAQEAKEVMERQNRRKEQPKAEAPAPVQPAPAPSAPAANPSPAPAAVDTRRKKQARPDKKRDDFDREEEGPRKQQKNRSSQNQVRNQRNSNWNKNKKNKKGKGNNNQAPKPVTERKFHELPTEFEYTDGMTVAEIAKRIKREPAEIVKKLFMMGVMATQNQSLDGDTIELLMVDYGIEAKKKVEVDTADIERFFVEEGYINQDALVERPPVVTIMGHVDHGKTTLLDTLRNSRVATGEAGGITQHIGAYQIEESGKKITFLDTPGHAAFTSMRARGASVTDITILVVAADDGVMPQTIEAINHSKAADVPIIVAINKIDKPGANPERVIGELAEHGVMSTAWGGDSEFVEISAKFNQNIDSLLETVLLVAEIQELKADPTVRAIGTVIEARLDKGKGAVATLLVQQGTLNVQDPIVVGNTFGRVRAMTNDLGRRVKVAGPSTPVSITGLNETPMAGDHFAVYEDEKAARAAGEERAKRALLKQRQATHRVSLENLFDTLKAGEVKSVNVIIKADVQGSVEALSASLQKIEVEGVKITIVHSAVGAINESDVTLAEASNAFIIGFNVRPTSQARQQAEADDVEIRLHSIIYKVIEEMEDAMKGMLDPEYEEKIIGEALIRETFKVSKVGTIGGFMVINGKVTRDSKVRVIRDGVVIYDGELASLKHFKDDVKEVTNGREGGLMIDGYNDIQVDDTIEAYIMEEIKK</sequence>